<protein>
    <recommendedName>
        <fullName>E3 ubiquitin-protein ligase HUWE1</fullName>
        <ecNumber evidence="2">2.3.2.26</ecNumber>
    </recommendedName>
    <alternativeName>
        <fullName>HECT, UBA and WWE domain-containing protein 1</fullName>
    </alternativeName>
    <alternativeName>
        <fullName>HECT-type E3 ubiquitin transferase HUWE1</fullName>
    </alternativeName>
    <alternativeName>
        <fullName>Upstream regulatory element-binding protein 1</fullName>
        <shortName>URE-B1</shortName>
        <shortName>URE-binding protein 1</shortName>
    </alternativeName>
</protein>
<proteinExistence type="evidence at protein level"/>
<keyword id="KW-0007">Acetylation</keyword>
<keyword id="KW-0090">Biological rhythms</keyword>
<keyword id="KW-0963">Cytoplasm</keyword>
<keyword id="KW-0221">Differentiation</keyword>
<keyword id="KW-0227">DNA damage</keyword>
<keyword id="KW-0234">DNA repair</keyword>
<keyword id="KW-0238">DNA-binding</keyword>
<keyword id="KW-0488">Methylation</keyword>
<keyword id="KW-0496">Mitochondrion</keyword>
<keyword id="KW-0539">Nucleus</keyword>
<keyword id="KW-0597">Phosphoprotein</keyword>
<keyword id="KW-1185">Reference proteome</keyword>
<keyword id="KW-0808">Transferase</keyword>
<keyword id="KW-0833">Ubl conjugation pathway</keyword>
<evidence type="ECO:0000250" key="1">
    <source>
        <dbReference type="UniProtKB" id="Q7TMY8"/>
    </source>
</evidence>
<evidence type="ECO:0000250" key="2">
    <source>
        <dbReference type="UniProtKB" id="Q7Z6Z7"/>
    </source>
</evidence>
<evidence type="ECO:0000255" key="3">
    <source>
        <dbReference type="PROSITE-ProRule" id="PRU00104"/>
    </source>
</evidence>
<evidence type="ECO:0000255" key="4">
    <source>
        <dbReference type="PROSITE-ProRule" id="PRU00212"/>
    </source>
</evidence>
<evidence type="ECO:0000255" key="5">
    <source>
        <dbReference type="PROSITE-ProRule" id="PRU00248"/>
    </source>
</evidence>
<evidence type="ECO:0000256" key="6">
    <source>
        <dbReference type="SAM" id="MobiDB-lite"/>
    </source>
</evidence>
<evidence type="ECO:0000269" key="7">
    <source>
    </source>
</evidence>
<evidence type="ECO:0000269" key="8">
    <source>
    </source>
</evidence>
<evidence type="ECO:0000269" key="9">
    <source>
    </source>
</evidence>
<evidence type="ECO:0000305" key="10"/>
<evidence type="ECO:0000305" key="11">
    <source>
    </source>
</evidence>
<name>HUWE1_RAT</name>
<dbReference type="EC" id="2.3.2.26" evidence="2"/>
<dbReference type="EMBL" id="AABR07037469">
    <property type="status" value="NOT_ANNOTATED_CDS"/>
    <property type="molecule type" value="Genomic_DNA"/>
</dbReference>
<dbReference type="EMBL" id="AABR07037468">
    <property type="status" value="NOT_ANNOTATED_CDS"/>
    <property type="molecule type" value="Genomic_DNA"/>
</dbReference>
<dbReference type="EMBL" id="AABR07037467">
    <property type="status" value="NOT_ANNOTATED_CDS"/>
    <property type="molecule type" value="Genomic_DNA"/>
</dbReference>
<dbReference type="EMBL" id="AABR07037466">
    <property type="status" value="NOT_ANNOTATED_CDS"/>
    <property type="molecule type" value="Genomic_DNA"/>
</dbReference>
<dbReference type="EMBL" id="AABR07037465">
    <property type="status" value="NOT_ANNOTATED_CDS"/>
    <property type="molecule type" value="Genomic_DNA"/>
</dbReference>
<dbReference type="EMBL" id="U08214">
    <property type="protein sequence ID" value="AAA81950.1"/>
    <property type="status" value="ALT_FRAME"/>
    <property type="molecule type" value="mRNA"/>
</dbReference>
<dbReference type="RefSeq" id="XP_063136284.1">
    <property type="nucleotide sequence ID" value="XM_063280214.1"/>
</dbReference>
<dbReference type="RefSeq" id="XP_063136285.1">
    <property type="nucleotide sequence ID" value="XM_063280215.1"/>
</dbReference>
<dbReference type="RefSeq" id="XP_063136286.1">
    <property type="nucleotide sequence ID" value="XM_063280216.1"/>
</dbReference>
<dbReference type="RefSeq" id="XP_063136287.1">
    <property type="nucleotide sequence ID" value="XM_063280217.1"/>
</dbReference>
<dbReference type="RefSeq" id="XP_063136288.1">
    <property type="nucleotide sequence ID" value="XM_063280218.1"/>
</dbReference>
<dbReference type="RefSeq" id="XP_063136289.1">
    <property type="nucleotide sequence ID" value="XM_063280219.1"/>
</dbReference>
<dbReference type="RefSeq" id="XP_063136290.1">
    <property type="nucleotide sequence ID" value="XM_063280220.1"/>
</dbReference>
<dbReference type="RefSeq" id="XP_063136291.1">
    <property type="nucleotide sequence ID" value="XM_063280221.1"/>
</dbReference>
<dbReference type="RefSeq" id="XP_063136292.1">
    <property type="nucleotide sequence ID" value="XM_063280222.1"/>
</dbReference>
<dbReference type="SMR" id="P51593"/>
<dbReference type="FunCoup" id="P51593">
    <property type="interactions" value="23"/>
</dbReference>
<dbReference type="GlyGen" id="P51593">
    <property type="glycosylation" value="7 sites, 1 O-linked glycan (1 site)"/>
</dbReference>
<dbReference type="iPTMnet" id="P51593"/>
<dbReference type="PhosphoSitePlus" id="P51593"/>
<dbReference type="jPOST" id="P51593"/>
<dbReference type="PaxDb" id="10116-ENSRNOP00000003882"/>
<dbReference type="Ensembl" id="ENSRNOT00000098599.1">
    <property type="protein sequence ID" value="ENSRNOP00000095129.1"/>
    <property type="gene ID" value="ENSRNOG00000061262.2"/>
</dbReference>
<dbReference type="GeneID" id="501546"/>
<dbReference type="AGR" id="RGD:1561763"/>
<dbReference type="RGD" id="1561763">
    <property type="gene designation" value="Huwe1"/>
</dbReference>
<dbReference type="eggNOG" id="KOG0939">
    <property type="taxonomic scope" value="Eukaryota"/>
</dbReference>
<dbReference type="GeneTree" id="ENSGT00940000156319"/>
<dbReference type="HOGENOM" id="CLU_363145_0_0_1"/>
<dbReference type="InParanoid" id="P51593"/>
<dbReference type="OMA" id="ADEMKYG"/>
<dbReference type="PhylomeDB" id="P51593"/>
<dbReference type="UniPathway" id="UPA00143"/>
<dbReference type="PRO" id="PR:P51593"/>
<dbReference type="Proteomes" id="UP000002494">
    <property type="component" value="Chromosome X"/>
</dbReference>
<dbReference type="GO" id="GO:0005737">
    <property type="term" value="C:cytoplasm"/>
    <property type="evidence" value="ECO:0000250"/>
    <property type="project" value="UniProtKB"/>
</dbReference>
<dbReference type="GO" id="GO:0000139">
    <property type="term" value="C:Golgi membrane"/>
    <property type="evidence" value="ECO:0000318"/>
    <property type="project" value="GO_Central"/>
</dbReference>
<dbReference type="GO" id="GO:0005739">
    <property type="term" value="C:mitochondrion"/>
    <property type="evidence" value="ECO:0007669"/>
    <property type="project" value="UniProtKB-SubCell"/>
</dbReference>
<dbReference type="GO" id="GO:0005634">
    <property type="term" value="C:nucleus"/>
    <property type="evidence" value="ECO:0000314"/>
    <property type="project" value="UniProtKB"/>
</dbReference>
<dbReference type="GO" id="GO:0003677">
    <property type="term" value="F:DNA binding"/>
    <property type="evidence" value="ECO:0000314"/>
    <property type="project" value="UniProtKB"/>
</dbReference>
<dbReference type="GO" id="GO:0140852">
    <property type="term" value="F:histone ubiquitin ligase activity"/>
    <property type="evidence" value="ECO:0000250"/>
    <property type="project" value="UniProtKB"/>
</dbReference>
<dbReference type="GO" id="GO:0061630">
    <property type="term" value="F:ubiquitin protein ligase activity"/>
    <property type="evidence" value="ECO:0000250"/>
    <property type="project" value="UniProtKB"/>
</dbReference>
<dbReference type="GO" id="GO:0004842">
    <property type="term" value="F:ubiquitin-protein transferase activity"/>
    <property type="evidence" value="ECO:0000250"/>
    <property type="project" value="UniProtKB"/>
</dbReference>
<dbReference type="GO" id="GO:0034450">
    <property type="term" value="F:ubiquitin-ubiquitin ligase activity"/>
    <property type="evidence" value="ECO:0000266"/>
    <property type="project" value="RGD"/>
</dbReference>
<dbReference type="GO" id="GO:0006284">
    <property type="term" value="P:base-excision repair"/>
    <property type="evidence" value="ECO:0000250"/>
    <property type="project" value="UniProtKB"/>
</dbReference>
<dbReference type="GO" id="GO:0030154">
    <property type="term" value="P:cell differentiation"/>
    <property type="evidence" value="ECO:0007669"/>
    <property type="project" value="UniProtKB-KW"/>
</dbReference>
<dbReference type="GO" id="GO:0032922">
    <property type="term" value="P:circadian regulation of gene expression"/>
    <property type="evidence" value="ECO:0000250"/>
    <property type="project" value="UniProtKB"/>
</dbReference>
<dbReference type="GO" id="GO:0007030">
    <property type="term" value="P:Golgi organization"/>
    <property type="evidence" value="ECO:0000318"/>
    <property type="project" value="GO_Central"/>
</dbReference>
<dbReference type="GO" id="GO:0061025">
    <property type="term" value="P:membrane fusion"/>
    <property type="evidence" value="ECO:0000318"/>
    <property type="project" value="GO_Central"/>
</dbReference>
<dbReference type="GO" id="GO:0010637">
    <property type="term" value="P:negative regulation of mitochondrial fusion"/>
    <property type="evidence" value="ECO:0000266"/>
    <property type="project" value="RGD"/>
</dbReference>
<dbReference type="GO" id="GO:0035359">
    <property type="term" value="P:negative regulation of peroxisome proliferator activated receptor signaling pathway"/>
    <property type="evidence" value="ECO:0000250"/>
    <property type="project" value="UniProtKB"/>
</dbReference>
<dbReference type="GO" id="GO:0043123">
    <property type="term" value="P:positive regulation of canonical NF-kappaB signal transduction"/>
    <property type="evidence" value="ECO:0000250"/>
    <property type="project" value="UniProtKB"/>
</dbReference>
<dbReference type="GO" id="GO:0031398">
    <property type="term" value="P:positive regulation of protein ubiquitination"/>
    <property type="evidence" value="ECO:0000250"/>
    <property type="project" value="UniProtKB"/>
</dbReference>
<dbReference type="GO" id="GO:1905091">
    <property type="term" value="P:positive regulation of type 2 mitophagy"/>
    <property type="evidence" value="ECO:0000266"/>
    <property type="project" value="RGD"/>
</dbReference>
<dbReference type="GO" id="GO:0043161">
    <property type="term" value="P:proteasome-mediated ubiquitin-dependent protein catabolic process"/>
    <property type="evidence" value="ECO:0000250"/>
    <property type="project" value="UniProtKB"/>
</dbReference>
<dbReference type="GO" id="GO:0141198">
    <property type="term" value="P:protein branched polyubiquitination"/>
    <property type="evidence" value="ECO:0000250"/>
    <property type="project" value="UniProtKB"/>
</dbReference>
<dbReference type="GO" id="GO:0070936">
    <property type="term" value="P:protein K48-linked ubiquitination"/>
    <property type="evidence" value="ECO:0000250"/>
    <property type="project" value="UniProtKB"/>
</dbReference>
<dbReference type="GO" id="GO:0006513">
    <property type="term" value="P:protein monoubiquitination"/>
    <property type="evidence" value="ECO:0000250"/>
    <property type="project" value="UniProtKB"/>
</dbReference>
<dbReference type="GO" id="GO:0000209">
    <property type="term" value="P:protein polyubiquitination"/>
    <property type="evidence" value="ECO:0000250"/>
    <property type="project" value="UniProtKB"/>
</dbReference>
<dbReference type="GO" id="GO:0006511">
    <property type="term" value="P:ubiquitin-dependent protein catabolic process"/>
    <property type="evidence" value="ECO:0000318"/>
    <property type="project" value="GO_Central"/>
</dbReference>
<dbReference type="CDD" id="cd00078">
    <property type="entry name" value="HECTc"/>
    <property type="match status" value="1"/>
</dbReference>
<dbReference type="CDD" id="cd14288">
    <property type="entry name" value="UBA_HUWE1"/>
    <property type="match status" value="1"/>
</dbReference>
<dbReference type="FunFam" id="3.30.2160.10:FF:000007">
    <property type="entry name" value="E3 ubiquitin-protein ligase HUWE1 isoform X2"/>
    <property type="match status" value="1"/>
</dbReference>
<dbReference type="FunFam" id="3.30.2410.10:FF:000004">
    <property type="entry name" value="E3 ubiquitin-protein ligase HUWE1, variant"/>
    <property type="match status" value="1"/>
</dbReference>
<dbReference type="FunFam" id="3.90.1750.10:FF:000003">
    <property type="entry name" value="E3 ubiquitin-protein ligase UPL1"/>
    <property type="match status" value="1"/>
</dbReference>
<dbReference type="FunFam" id="1.10.8.10:FF:000019">
    <property type="entry name" value="Putative e3 ubiquitin-protein ligase huwe1 isoform x2"/>
    <property type="match status" value="1"/>
</dbReference>
<dbReference type="FunFam" id="3.30.720.50:FF:000002">
    <property type="entry name" value="Putative e3 ubiquitin-protein ligase huwe1 isoform x2"/>
    <property type="match status" value="1"/>
</dbReference>
<dbReference type="Gene3D" id="3.30.720.50">
    <property type="match status" value="1"/>
</dbReference>
<dbReference type="Gene3D" id="6.10.250.1630">
    <property type="match status" value="1"/>
</dbReference>
<dbReference type="Gene3D" id="1.10.8.10">
    <property type="entry name" value="DNA helicase RuvA subunit, C-terminal domain"/>
    <property type="match status" value="1"/>
</dbReference>
<dbReference type="Gene3D" id="3.30.2160.10">
    <property type="entry name" value="Hect, E3 ligase catalytic domain"/>
    <property type="match status" value="1"/>
</dbReference>
<dbReference type="Gene3D" id="3.30.2410.10">
    <property type="entry name" value="Hect, E3 ligase catalytic domain"/>
    <property type="match status" value="1"/>
</dbReference>
<dbReference type="Gene3D" id="3.90.1750.10">
    <property type="entry name" value="Hect, E3 ligase catalytic domains"/>
    <property type="match status" value="1"/>
</dbReference>
<dbReference type="InterPro" id="IPR016024">
    <property type="entry name" value="ARM-type_fold"/>
</dbReference>
<dbReference type="InterPro" id="IPR010309">
    <property type="entry name" value="E3_Ub_ligase_DUF908"/>
</dbReference>
<dbReference type="InterPro" id="IPR010314">
    <property type="entry name" value="E3_Ub_ligase_DUF913"/>
</dbReference>
<dbReference type="InterPro" id="IPR050409">
    <property type="entry name" value="E3_ubiq-protein_ligase"/>
</dbReference>
<dbReference type="InterPro" id="IPR000569">
    <property type="entry name" value="HECT_dom"/>
</dbReference>
<dbReference type="InterPro" id="IPR035983">
    <property type="entry name" value="Hect_E3_ubiquitin_ligase"/>
</dbReference>
<dbReference type="InterPro" id="IPR025527">
    <property type="entry name" value="HUWE1/Rev1_UBM"/>
</dbReference>
<dbReference type="InterPro" id="IPR015940">
    <property type="entry name" value="UBA"/>
</dbReference>
<dbReference type="InterPro" id="IPR009060">
    <property type="entry name" value="UBA-like_sf"/>
</dbReference>
<dbReference type="InterPro" id="IPR041918">
    <property type="entry name" value="UBA_HUWE1"/>
</dbReference>
<dbReference type="InterPro" id="IPR004170">
    <property type="entry name" value="WWE_dom"/>
</dbReference>
<dbReference type="InterPro" id="IPR037197">
    <property type="entry name" value="WWE_dom_sf"/>
</dbReference>
<dbReference type="PANTHER" id="PTHR11254:SF67">
    <property type="entry name" value="E3 UBIQUITIN-PROTEIN LIGASE HUWE1"/>
    <property type="match status" value="1"/>
</dbReference>
<dbReference type="PANTHER" id="PTHR11254">
    <property type="entry name" value="HECT DOMAIN UBIQUITIN-PROTEIN LIGASE"/>
    <property type="match status" value="1"/>
</dbReference>
<dbReference type="Pfam" id="PF06012">
    <property type="entry name" value="DUF908"/>
    <property type="match status" value="1"/>
</dbReference>
<dbReference type="Pfam" id="PF06025">
    <property type="entry name" value="DUF913"/>
    <property type="match status" value="1"/>
</dbReference>
<dbReference type="Pfam" id="PF00632">
    <property type="entry name" value="HECT"/>
    <property type="match status" value="1"/>
</dbReference>
<dbReference type="Pfam" id="PF22562">
    <property type="entry name" value="UBA_7"/>
    <property type="match status" value="1"/>
</dbReference>
<dbReference type="Pfam" id="PF14377">
    <property type="entry name" value="UBM"/>
    <property type="match status" value="3"/>
</dbReference>
<dbReference type="Pfam" id="PF02825">
    <property type="entry name" value="WWE"/>
    <property type="match status" value="1"/>
</dbReference>
<dbReference type="SMART" id="SM00119">
    <property type="entry name" value="HECTc"/>
    <property type="match status" value="1"/>
</dbReference>
<dbReference type="SMART" id="SM00165">
    <property type="entry name" value="UBA"/>
    <property type="match status" value="1"/>
</dbReference>
<dbReference type="SUPFAM" id="SSF48371">
    <property type="entry name" value="ARM repeat"/>
    <property type="match status" value="1"/>
</dbReference>
<dbReference type="SUPFAM" id="SSF56204">
    <property type="entry name" value="Hect, E3 ligase catalytic domain"/>
    <property type="match status" value="1"/>
</dbReference>
<dbReference type="SUPFAM" id="SSF46934">
    <property type="entry name" value="UBA-like"/>
    <property type="match status" value="1"/>
</dbReference>
<dbReference type="SUPFAM" id="SSF117839">
    <property type="entry name" value="WWE domain"/>
    <property type="match status" value="1"/>
</dbReference>
<dbReference type="PROSITE" id="PS50237">
    <property type="entry name" value="HECT"/>
    <property type="match status" value="1"/>
</dbReference>
<dbReference type="PROSITE" id="PS50030">
    <property type="entry name" value="UBA"/>
    <property type="match status" value="1"/>
</dbReference>
<dbReference type="PROSITE" id="PS50918">
    <property type="entry name" value="WWE"/>
    <property type="match status" value="1"/>
</dbReference>
<reference key="1">
    <citation type="journal article" date="2004" name="Nature">
        <title>Genome sequence of the Brown Norway rat yields insights into mammalian evolution.</title>
        <authorList>
            <person name="Gibbs R.A."/>
            <person name="Weinstock G.M."/>
            <person name="Metzker M.L."/>
            <person name="Muzny D.M."/>
            <person name="Sodergren E.J."/>
            <person name="Scherer S."/>
            <person name="Scott G."/>
            <person name="Steffen D."/>
            <person name="Worley K.C."/>
            <person name="Burch P.E."/>
            <person name="Okwuonu G."/>
            <person name="Hines S."/>
            <person name="Lewis L."/>
            <person name="Deramo C."/>
            <person name="Delgado O."/>
            <person name="Dugan-Rocha S."/>
            <person name="Miner G."/>
            <person name="Morgan M."/>
            <person name="Hawes A."/>
            <person name="Gill R."/>
            <person name="Holt R.A."/>
            <person name="Adams M.D."/>
            <person name="Amanatides P.G."/>
            <person name="Baden-Tillson H."/>
            <person name="Barnstead M."/>
            <person name="Chin S."/>
            <person name="Evans C.A."/>
            <person name="Ferriera S."/>
            <person name="Fosler C."/>
            <person name="Glodek A."/>
            <person name="Gu Z."/>
            <person name="Jennings D."/>
            <person name="Kraft C.L."/>
            <person name="Nguyen T."/>
            <person name="Pfannkoch C.M."/>
            <person name="Sitter C."/>
            <person name="Sutton G.G."/>
            <person name="Venter J.C."/>
            <person name="Woodage T."/>
            <person name="Smith D."/>
            <person name="Lee H.-M."/>
            <person name="Gustafson E."/>
            <person name="Cahill P."/>
            <person name="Kana A."/>
            <person name="Doucette-Stamm L."/>
            <person name="Weinstock K."/>
            <person name="Fechtel K."/>
            <person name="Weiss R.B."/>
            <person name="Dunn D.M."/>
            <person name="Green E.D."/>
            <person name="Blakesley R.W."/>
            <person name="Bouffard G.G."/>
            <person name="De Jong P.J."/>
            <person name="Osoegawa K."/>
            <person name="Zhu B."/>
            <person name="Marra M."/>
            <person name="Schein J."/>
            <person name="Bosdet I."/>
            <person name="Fjell C."/>
            <person name="Jones S."/>
            <person name="Krzywinski M."/>
            <person name="Mathewson C."/>
            <person name="Siddiqui A."/>
            <person name="Wye N."/>
            <person name="McPherson J."/>
            <person name="Zhao S."/>
            <person name="Fraser C.M."/>
            <person name="Shetty J."/>
            <person name="Shatsman S."/>
            <person name="Geer K."/>
            <person name="Chen Y."/>
            <person name="Abramzon S."/>
            <person name="Nierman W.C."/>
            <person name="Havlak P.H."/>
            <person name="Chen R."/>
            <person name="Durbin K.J."/>
            <person name="Egan A."/>
            <person name="Ren Y."/>
            <person name="Song X.-Z."/>
            <person name="Li B."/>
            <person name="Liu Y."/>
            <person name="Qin X."/>
            <person name="Cawley S."/>
            <person name="Cooney A.J."/>
            <person name="D'Souza L.M."/>
            <person name="Martin K."/>
            <person name="Wu J.Q."/>
            <person name="Gonzalez-Garay M.L."/>
            <person name="Jackson A.R."/>
            <person name="Kalafus K.J."/>
            <person name="McLeod M.P."/>
            <person name="Milosavljevic A."/>
            <person name="Virk D."/>
            <person name="Volkov A."/>
            <person name="Wheeler D.A."/>
            <person name="Zhang Z."/>
            <person name="Bailey J.A."/>
            <person name="Eichler E.E."/>
            <person name="Tuzun E."/>
            <person name="Birney E."/>
            <person name="Mongin E."/>
            <person name="Ureta-Vidal A."/>
            <person name="Woodwark C."/>
            <person name="Zdobnov E."/>
            <person name="Bork P."/>
            <person name="Suyama M."/>
            <person name="Torrents D."/>
            <person name="Alexandersson M."/>
            <person name="Trask B.J."/>
            <person name="Young J.M."/>
            <person name="Huang H."/>
            <person name="Wang H."/>
            <person name="Xing H."/>
            <person name="Daniels S."/>
            <person name="Gietzen D."/>
            <person name="Schmidt J."/>
            <person name="Stevens K."/>
            <person name="Vitt U."/>
            <person name="Wingrove J."/>
            <person name="Camara F."/>
            <person name="Mar Alba M."/>
            <person name="Abril J.F."/>
            <person name="Guigo R."/>
            <person name="Smit A."/>
            <person name="Dubchak I."/>
            <person name="Rubin E.M."/>
            <person name="Couronne O."/>
            <person name="Poliakov A."/>
            <person name="Huebner N."/>
            <person name="Ganten D."/>
            <person name="Goesele C."/>
            <person name="Hummel O."/>
            <person name="Kreitler T."/>
            <person name="Lee Y.-A."/>
            <person name="Monti J."/>
            <person name="Schulz H."/>
            <person name="Zimdahl H."/>
            <person name="Himmelbauer H."/>
            <person name="Lehrach H."/>
            <person name="Jacob H.J."/>
            <person name="Bromberg S."/>
            <person name="Gullings-Handley J."/>
            <person name="Jensen-Seaman M.I."/>
            <person name="Kwitek A.E."/>
            <person name="Lazar J."/>
            <person name="Pasko D."/>
            <person name="Tonellato P.J."/>
            <person name="Twigger S."/>
            <person name="Ponting C.P."/>
            <person name="Duarte J.M."/>
            <person name="Rice S."/>
            <person name="Goodstadt L."/>
            <person name="Beatson S.A."/>
            <person name="Emes R.D."/>
            <person name="Winter E.E."/>
            <person name="Webber C."/>
            <person name="Brandt P."/>
            <person name="Nyakatura G."/>
            <person name="Adetobi M."/>
            <person name="Chiaromonte F."/>
            <person name="Elnitski L."/>
            <person name="Eswara P."/>
            <person name="Hardison R.C."/>
            <person name="Hou M."/>
            <person name="Kolbe D."/>
            <person name="Makova K."/>
            <person name="Miller W."/>
            <person name="Nekrutenko A."/>
            <person name="Riemer C."/>
            <person name="Schwartz S."/>
            <person name="Taylor J."/>
            <person name="Yang S."/>
            <person name="Zhang Y."/>
            <person name="Lindpaintner K."/>
            <person name="Andrews T.D."/>
            <person name="Caccamo M."/>
            <person name="Clamp M."/>
            <person name="Clarke L."/>
            <person name="Curwen V."/>
            <person name="Durbin R.M."/>
            <person name="Eyras E."/>
            <person name="Searle S.M."/>
            <person name="Cooper G.M."/>
            <person name="Batzoglou S."/>
            <person name="Brudno M."/>
            <person name="Sidow A."/>
            <person name="Stone E.A."/>
            <person name="Payseur B.A."/>
            <person name="Bourque G."/>
            <person name="Lopez-Otin C."/>
            <person name="Puente X.S."/>
            <person name="Chakrabarti K."/>
            <person name="Chatterji S."/>
            <person name="Dewey C."/>
            <person name="Pachter L."/>
            <person name="Bray N."/>
            <person name="Yap V.B."/>
            <person name="Caspi A."/>
            <person name="Tesler G."/>
            <person name="Pevzner P.A."/>
            <person name="Haussler D."/>
            <person name="Roskin K.M."/>
            <person name="Baertsch R."/>
            <person name="Clawson H."/>
            <person name="Furey T.S."/>
            <person name="Hinrichs A.S."/>
            <person name="Karolchik D."/>
            <person name="Kent W.J."/>
            <person name="Rosenbloom K.R."/>
            <person name="Trumbower H."/>
            <person name="Weirauch M."/>
            <person name="Cooper D.N."/>
            <person name="Stenson P.D."/>
            <person name="Ma B."/>
            <person name="Brent M."/>
            <person name="Arumugam M."/>
            <person name="Shteynberg D."/>
            <person name="Copley R.R."/>
            <person name="Taylor M.S."/>
            <person name="Riethman H."/>
            <person name="Mudunuri U."/>
            <person name="Peterson J."/>
            <person name="Guyer M."/>
            <person name="Felsenfeld A."/>
            <person name="Old S."/>
            <person name="Mockrin S."/>
            <person name="Collins F.S."/>
        </authorList>
    </citation>
    <scope>NUCLEOTIDE SEQUENCE [LARGE SCALE GENOMIC DNA]</scope>
    <source>
        <strain>Brown Norway</strain>
    </source>
</reference>
<reference key="2">
    <citation type="journal article" date="1994" name="Brain Res. Mol. Brain Res.">
        <title>Cloning of a DNA binding protein that is a tyrosine kinase substrate and recognizes an upstream initiator-like sequence in the promoter of the preprodynorphin gene.</title>
        <authorList>
            <person name="Gu J."/>
            <person name="Ren K."/>
            <person name="Dubner R."/>
            <person name="Iadarola M.J."/>
        </authorList>
    </citation>
    <scope>NUCLEOTIDE SEQUENCE [MRNA] OF 4133-4454</scope>
    <scope>FUNCTION</scope>
    <scope>SUBCELLULAR LOCATION</scope>
    <source>
        <tissue>Brain</tissue>
    </source>
</reference>
<reference key="3">
    <citation type="journal article" date="1995" name="Oncogene">
        <title>UREB1, a tyrosine phosphorylated nuclear protein, inhibits p53 transactivation.</title>
        <authorList>
            <person name="Gu J."/>
            <person name="Dubner R."/>
            <person name="Fornace A.J. Jr."/>
            <person name="Iadarola M.J."/>
        </authorList>
    </citation>
    <scope>FUNCTION</scope>
    <scope>PHOSPHORYLATION AT TYR-4351</scope>
    <scope>MUTAGENESIS OF TYR-4351</scope>
</reference>
<reference key="4">
    <citation type="journal article" date="2007" name="Dev. Dyn.">
        <title>Regulated expression of the ubiquitin protein ligase, E3(Histone)/LASU1/Mule/ARF-BP1/HUWE1, during spermatogenesis.</title>
        <authorList>
            <person name="Liu Z."/>
            <person name="Miao D."/>
            <person name="Xia Q."/>
            <person name="Hermo L."/>
            <person name="Wing S.S."/>
        </authorList>
    </citation>
    <scope>TISSUE SPECIFICITY</scope>
    <scope>DEVELOPMENTAL STAGE</scope>
</reference>
<feature type="chain" id="PRO_0000120342" description="E3 ubiquitin-protein ligase HUWE1">
    <location>
        <begin position="1"/>
        <end position="4454"/>
    </location>
</feature>
<feature type="domain" description="UBA" evidence="4">
    <location>
        <begin position="1392"/>
        <end position="1431"/>
    </location>
</feature>
<feature type="domain" description="UIM" evidence="10">
    <location>
        <begin position="1446"/>
        <end position="1465"/>
    </location>
</feature>
<feature type="domain" description="WWE" evidence="5">
    <location>
        <begin position="1679"/>
        <end position="1756"/>
    </location>
</feature>
<feature type="domain" description="HECT" evidence="3">
    <location>
        <begin position="4118"/>
        <end position="4454"/>
    </location>
</feature>
<feature type="region of interest" description="Disordered" evidence="6">
    <location>
        <begin position="521"/>
        <end position="575"/>
    </location>
</feature>
<feature type="region of interest" description="Disordered" evidence="6">
    <location>
        <begin position="781"/>
        <end position="834"/>
    </location>
</feature>
<feature type="region of interest" description="Disordered" evidence="6">
    <location>
        <begin position="1054"/>
        <end position="1077"/>
    </location>
</feature>
<feature type="region of interest" description="Disordered" evidence="6">
    <location>
        <begin position="1094"/>
        <end position="1114"/>
    </location>
</feature>
<feature type="region of interest" description="Disordered" evidence="6">
    <location>
        <begin position="1367"/>
        <end position="1396"/>
    </location>
</feature>
<feature type="region of interest" description="Disordered" evidence="6">
    <location>
        <begin position="1472"/>
        <end position="1491"/>
    </location>
</feature>
<feature type="region of interest" description="Disordered" evidence="6">
    <location>
        <begin position="1766"/>
        <end position="1802"/>
    </location>
</feature>
<feature type="region of interest" description="Disordered" evidence="6">
    <location>
        <begin position="2095"/>
        <end position="2142"/>
    </location>
</feature>
<feature type="region of interest" description="Disordered" evidence="6">
    <location>
        <begin position="2339"/>
        <end position="2420"/>
    </location>
</feature>
<feature type="region of interest" description="Disordered" evidence="6">
    <location>
        <begin position="2433"/>
        <end position="2556"/>
    </location>
</feature>
<feature type="region of interest" description="Disordered" evidence="6">
    <location>
        <begin position="2781"/>
        <end position="3047"/>
    </location>
</feature>
<feature type="region of interest" description="Disordered" evidence="6">
    <location>
        <begin position="3113"/>
        <end position="3136"/>
    </location>
</feature>
<feature type="region of interest" description="Disordered" evidence="6">
    <location>
        <begin position="3320"/>
        <end position="3343"/>
    </location>
</feature>
<feature type="region of interest" description="Disordered" evidence="6">
    <location>
        <begin position="3431"/>
        <end position="3458"/>
    </location>
</feature>
<feature type="region of interest" description="Disordered" evidence="6">
    <location>
        <begin position="3482"/>
        <end position="3501"/>
    </location>
</feature>
<feature type="region of interest" description="Disordered" evidence="6">
    <location>
        <begin position="3548"/>
        <end position="3590"/>
    </location>
</feature>
<feature type="region of interest" description="Disordered" evidence="6">
    <location>
        <begin position="3615"/>
        <end position="3642"/>
    </location>
</feature>
<feature type="region of interest" description="Disordered" evidence="6">
    <location>
        <begin position="3815"/>
        <end position="3836"/>
    </location>
</feature>
<feature type="region of interest" description="Disordered" evidence="6">
    <location>
        <begin position="3859"/>
        <end position="3927"/>
    </location>
</feature>
<feature type="region of interest" description="Disordered" evidence="6">
    <location>
        <begin position="3974"/>
        <end position="4028"/>
    </location>
</feature>
<feature type="compositionally biased region" description="Low complexity" evidence="6">
    <location>
        <begin position="523"/>
        <end position="533"/>
    </location>
</feature>
<feature type="compositionally biased region" description="Pro residues" evidence="6">
    <location>
        <begin position="535"/>
        <end position="571"/>
    </location>
</feature>
<feature type="compositionally biased region" description="Acidic residues" evidence="6">
    <location>
        <begin position="801"/>
        <end position="811"/>
    </location>
</feature>
<feature type="compositionally biased region" description="Polar residues" evidence="6">
    <location>
        <begin position="813"/>
        <end position="832"/>
    </location>
</feature>
<feature type="compositionally biased region" description="Basic and acidic residues" evidence="6">
    <location>
        <begin position="1367"/>
        <end position="1378"/>
    </location>
</feature>
<feature type="compositionally biased region" description="Basic and acidic residues" evidence="6">
    <location>
        <begin position="1775"/>
        <end position="1795"/>
    </location>
</feature>
<feature type="compositionally biased region" description="Low complexity" evidence="6">
    <location>
        <begin position="2097"/>
        <end position="2112"/>
    </location>
</feature>
<feature type="compositionally biased region" description="Basic and acidic residues" evidence="6">
    <location>
        <begin position="2114"/>
        <end position="2134"/>
    </location>
</feature>
<feature type="compositionally biased region" description="Low complexity" evidence="6">
    <location>
        <begin position="2339"/>
        <end position="2368"/>
    </location>
</feature>
<feature type="compositionally biased region" description="Acidic residues" evidence="6">
    <location>
        <begin position="2372"/>
        <end position="2383"/>
    </location>
</feature>
<feature type="compositionally biased region" description="Acidic residues" evidence="6">
    <location>
        <begin position="2391"/>
        <end position="2402"/>
    </location>
</feature>
<feature type="compositionally biased region" description="Polar residues" evidence="6">
    <location>
        <begin position="2465"/>
        <end position="2475"/>
    </location>
</feature>
<feature type="compositionally biased region" description="Acidic residues" evidence="6">
    <location>
        <begin position="2485"/>
        <end position="2549"/>
    </location>
</feature>
<feature type="compositionally biased region" description="Basic and acidic residues" evidence="6">
    <location>
        <begin position="2781"/>
        <end position="2793"/>
    </location>
</feature>
<feature type="compositionally biased region" description="Polar residues" evidence="6">
    <location>
        <begin position="2794"/>
        <end position="2813"/>
    </location>
</feature>
<feature type="compositionally biased region" description="Low complexity" evidence="6">
    <location>
        <begin position="2815"/>
        <end position="2849"/>
    </location>
</feature>
<feature type="compositionally biased region" description="Polar residues" evidence="6">
    <location>
        <begin position="2895"/>
        <end position="2912"/>
    </location>
</feature>
<feature type="compositionally biased region" description="Polar residues" evidence="6">
    <location>
        <begin position="2924"/>
        <end position="2941"/>
    </location>
</feature>
<feature type="compositionally biased region" description="Polar residues" evidence="6">
    <location>
        <begin position="2954"/>
        <end position="2967"/>
    </location>
</feature>
<feature type="compositionally biased region" description="Low complexity" evidence="6">
    <location>
        <begin position="2990"/>
        <end position="3009"/>
    </location>
</feature>
<feature type="compositionally biased region" description="Basic and acidic residues" evidence="6">
    <location>
        <begin position="3432"/>
        <end position="3446"/>
    </location>
</feature>
<feature type="compositionally biased region" description="Low complexity" evidence="6">
    <location>
        <begin position="3447"/>
        <end position="3458"/>
    </location>
</feature>
<feature type="compositionally biased region" description="Low complexity" evidence="6">
    <location>
        <begin position="3552"/>
        <end position="3579"/>
    </location>
</feature>
<feature type="compositionally biased region" description="Low complexity" evidence="6">
    <location>
        <begin position="3615"/>
        <end position="3628"/>
    </location>
</feature>
<feature type="compositionally biased region" description="Low complexity" evidence="6">
    <location>
        <begin position="3826"/>
        <end position="3836"/>
    </location>
</feature>
<feature type="compositionally biased region" description="Polar residues" evidence="6">
    <location>
        <begin position="3871"/>
        <end position="3880"/>
    </location>
</feature>
<feature type="compositionally biased region" description="Polar residues" evidence="6">
    <location>
        <begin position="3894"/>
        <end position="3905"/>
    </location>
</feature>
<feature type="compositionally biased region" description="Basic and acidic residues" evidence="6">
    <location>
        <begin position="3913"/>
        <end position="3922"/>
    </location>
</feature>
<feature type="compositionally biased region" description="Basic and acidic residues" evidence="6">
    <location>
        <begin position="3974"/>
        <end position="3995"/>
    </location>
</feature>
<feature type="compositionally biased region" description="Pro residues" evidence="6">
    <location>
        <begin position="3996"/>
        <end position="4005"/>
    </location>
</feature>
<feature type="compositionally biased region" description="Polar residues" evidence="6">
    <location>
        <begin position="4018"/>
        <end position="4028"/>
    </location>
</feature>
<feature type="active site" description="Glycyl thioester intermediate" evidence="3">
    <location>
        <position position="4421"/>
    </location>
</feature>
<feature type="modified residue" description="Phosphoserine" evidence="1">
    <location>
        <position position="724"/>
    </location>
</feature>
<feature type="modified residue" description="Phosphoserine" evidence="1">
    <location>
        <position position="725"/>
    </location>
</feature>
<feature type="modified residue" description="Phosphoserine" evidence="2">
    <location>
        <position position="816"/>
    </location>
</feature>
<feature type="modified residue" description="Phosphoserine" evidence="2">
    <location>
        <position position="1160"/>
    </location>
</feature>
<feature type="modified residue" description="Phosphoserine" evidence="1">
    <location>
        <position position="1444"/>
    </location>
</feature>
<feature type="modified residue" description="Phosphoserine" evidence="2">
    <location>
        <position position="1446"/>
    </location>
</feature>
<feature type="modified residue" description="Phosphoserine" evidence="2">
    <location>
        <position position="1458"/>
    </location>
</feature>
<feature type="modified residue" description="Phosphoserine" evidence="1">
    <location>
        <position position="1471"/>
    </location>
</feature>
<feature type="modified residue" description="Phosphoserine" evidence="1">
    <location>
        <position position="1983"/>
    </location>
</feature>
<feature type="modified residue" description="Phosphothreonine" evidence="2">
    <location>
        <position position="2112"/>
    </location>
</feature>
<feature type="modified residue" description="Phosphoserine" evidence="2">
    <location>
        <position position="2343"/>
    </location>
</feature>
<feature type="modified residue" description="N6-acetyllysine" evidence="1">
    <location>
        <position position="2344"/>
    </location>
</feature>
<feature type="modified residue" description="Phosphoserine" evidence="1">
    <location>
        <position position="2439"/>
    </location>
</feature>
<feature type="modified residue" description="Phosphoserine" evidence="2">
    <location>
        <position position="2442"/>
    </location>
</feature>
<feature type="modified residue" description="Phosphoserine" evidence="2">
    <location>
        <position position="2468"/>
    </location>
</feature>
<feature type="modified residue" description="Phosphoserine" evidence="2">
    <location>
        <position position="2604"/>
    </location>
</feature>
<feature type="modified residue" description="Phosphoserine" evidence="2">
    <location>
        <position position="2609"/>
    </location>
</feature>
<feature type="modified residue" description="Phosphoserine" evidence="2">
    <location>
        <position position="2612"/>
    </location>
</feature>
<feature type="modified residue" description="Phosphothreonine" evidence="2">
    <location>
        <position position="2631"/>
    </location>
</feature>
<feature type="modified residue" description="Phosphoserine" evidence="2">
    <location>
        <position position="2661"/>
    </location>
</feature>
<feature type="modified residue" description="Phosphoserine" evidence="2">
    <location>
        <position position="2672"/>
    </location>
</feature>
<feature type="modified residue" description="Phosphoserine" evidence="2">
    <location>
        <position position="2696"/>
    </location>
</feature>
<feature type="modified residue" description="Phosphothreonine" evidence="2">
    <location>
        <position position="2828"/>
    </location>
</feature>
<feature type="modified residue" description="Phosphoserine" evidence="2">
    <location>
        <position position="2903"/>
    </location>
</feature>
<feature type="modified residue" description="Phosphoserine" evidence="2">
    <location>
        <position position="2910"/>
    </location>
</feature>
<feature type="modified residue" description="Phosphoserine" evidence="2">
    <location>
        <position position="2912"/>
    </location>
</feature>
<feature type="modified residue" description="Phosphoserine" evidence="2">
    <location>
        <position position="2938"/>
    </location>
</feature>
<feature type="modified residue" description="Phosphoserine" evidence="2">
    <location>
        <position position="2964"/>
    </location>
</feature>
<feature type="modified residue" description="Phosphoserine" evidence="2">
    <location>
        <position position="2965"/>
    </location>
</feature>
<feature type="modified residue" description="Phosphothreonine" evidence="2">
    <location>
        <position position="2966"/>
    </location>
</feature>
<feature type="modified residue" description="Phosphoserine" evidence="2">
    <location>
        <position position="2995"/>
    </location>
</feature>
<feature type="modified residue" description="Phosphoserine" evidence="2">
    <location>
        <position position="3193"/>
    </location>
</feature>
<feature type="modified residue" description="Phosphoserine" evidence="2">
    <location>
        <position position="3194"/>
    </location>
</feature>
<feature type="modified residue" description="Phosphoserine" evidence="2">
    <location>
        <position position="3199"/>
    </location>
</feature>
<feature type="modified residue" description="Phosphoserine" evidence="2">
    <location>
        <position position="3204"/>
    </location>
</feature>
<feature type="modified residue" description="Phosphoserine" evidence="2">
    <location>
        <position position="3212"/>
    </location>
</feature>
<feature type="modified residue" description="Omega-N-methylarginine" evidence="1">
    <location>
        <position position="3226"/>
    </location>
</feature>
<feature type="modified residue" description="Phosphoserine" evidence="2">
    <location>
        <position position="3633"/>
    </location>
</feature>
<feature type="modified residue" description="Phosphoserine" evidence="2">
    <location>
        <position position="3740"/>
    </location>
</feature>
<feature type="modified residue" description="Phosphoserine" evidence="2">
    <location>
        <position position="3830"/>
    </location>
</feature>
<feature type="modified residue" description="Phosphoserine" evidence="1">
    <location>
        <position position="3835"/>
    </location>
</feature>
<feature type="modified residue" description="Phosphoserine" evidence="2">
    <location>
        <position position="3837"/>
    </location>
</feature>
<feature type="modified residue" description="Phosphoserine" evidence="1">
    <location>
        <position position="3838"/>
    </location>
</feature>
<feature type="modified residue" description="Phosphoserine" evidence="1">
    <location>
        <position position="3887"/>
    </location>
</feature>
<feature type="modified residue" description="Phosphoserine" evidence="1">
    <location>
        <position position="3895"/>
    </location>
</feature>
<feature type="modified residue" description="Phosphoserine" evidence="2">
    <location>
        <position position="3907"/>
    </location>
</feature>
<feature type="modified residue" description="Phosphothreonine" evidence="2">
    <location>
        <position position="3910"/>
    </location>
</feature>
<feature type="modified residue" description="Phosphoserine" evidence="2">
    <location>
        <position position="3986"/>
    </location>
</feature>
<feature type="modified residue" description="Phosphoserine" evidence="1">
    <location>
        <position position="3999"/>
    </location>
</feature>
<feature type="modified residue" description="Phosphothreonine" evidence="1">
    <location>
        <position position="4004"/>
    </location>
</feature>
<feature type="modified residue" description="Phosphothreonine" evidence="1">
    <location>
        <position position="4007"/>
    </location>
</feature>
<feature type="modified residue" description="Phosphotyrosine" evidence="11">
    <location>
        <position position="4351"/>
    </location>
</feature>
<feature type="mutagenesis site" description="Abolishes its ability to inhibit transactivation of TP53." evidence="8">
    <original>Y</original>
    <variation>D</variation>
    <location>
        <position position="4351"/>
    </location>
</feature>
<accession>P51593</accession>
<accession>A0A8I6APS3</accession>
<comment type="function">
    <text evidence="1 2 8 9">E3 ubiquitin-protein ligase which mediates ubiquitination and subsequent proteasomal degradation of target proteins (By similarity). Regulates apoptosis by catalyzing the polyubiquitination and degradation of MCL1 (By similarity). Mediates monoubiquitination of DNA polymerase beta (POLB) at 'Lys-41', 'Lys-61' and 'Lys-81', thereby playing a role in base-excision repair (By similarity). Also ubiquitinates the p53/TP53 tumor suppressor and core histones including H1, H2A, H2B, H3 and H4 (PubMed:7478539). Ubiquitinates MFN2 to negatively regulate mitochondrial fusion in response to decreased stearoylation of TFRC (By similarity). Ubiquitination of MFN2 also takes place following induction of mitophagy; AMBRA1 acts as a cofactor for HUWE1-mediated ubiquitination (By similarity). Regulates neural differentiation and proliferation by catalyzing the polyubiquitination and degradation of MYCN (By similarity). May regulate abundance of CDC6 after DNA damage by polyubiquitinating and targeting CDC6 to degradation (By similarity). Mediates polyubiquitination of PA2G4 (By similarity). Acts in concert with MYCBP2 to regulate the circadian clock gene expression by promoting the lithium-induced ubiquination and degradation of NR1D1 (By similarity). Binds to an upstream initiator-like sequence in the preprodynorphin gene (PubMed:7968380). Mediates HAPSTR1 degradation, but is also a required cofactor in the pathway by which HAPSTR1 governs stress signaling (By similarity). Acts as a regulator of the JNK and NF-kappa-B signaling pathways by mediating assembly of heterotypic 'Lys-63'-/'Lys-48'-linked branched ubiquitin chains that are then recognized by TAB2: HUWE1 mediates branching of 'Lys-48'-linked chains of substrates initially modified with 'Lys-63'-linked conjugates by TRAF6 (By similarity). 'Lys-63'-/'Lys-48'-linked branched ubiquitin chains protect 'Lys-63'-linkages from CYLD deubiquitination (By similarity). Ubiquitinates PPARA in hepatocytes (By similarity).</text>
</comment>
<comment type="catalytic activity">
    <reaction evidence="2">
        <text>S-ubiquitinyl-[E2 ubiquitin-conjugating enzyme]-L-cysteine + [acceptor protein]-L-lysine = [E2 ubiquitin-conjugating enzyme]-L-cysteine + N(6)-ubiquitinyl-[acceptor protein]-L-lysine.</text>
        <dbReference type="EC" id="2.3.2.26"/>
    </reaction>
</comment>
<comment type="pathway">
    <text evidence="2">Protein modification; protein ubiquitination.</text>
</comment>
<comment type="subunit">
    <text evidence="1 2">Interacts with isoform p14ARF of CDKN2A which strongly inhibits HUWE1 ubiquitin ligase activity. Interacts with MYCN, POLB and CDC6. Interacts with isoform 2 of PA2G4. Interacts with NR1D1. Interacts with AMBRA1 (By similarity). Interacts with HAPSTR1 (By similarity). Interacts with HAPSTR2 (By similarity). In hepatocytes, interacts with PAQR3; the interaction promotes PPARA poylubiquitination and STUB1-mediated degradation (By similarity).</text>
</comment>
<comment type="subcellular location">
    <subcellularLocation>
        <location evidence="2">Cytoplasm</location>
    </subcellularLocation>
    <subcellularLocation>
        <location evidence="9">Nucleus</location>
    </subcellularLocation>
    <subcellularLocation>
        <location evidence="2">Mitochondrion</location>
    </subcellularLocation>
    <text evidence="1 2">Mainly expressed in the cytoplasm of most tissues, except in the nucleus of spermatogonia, primary spermatocytes and neuronal cells (By similarity). Recruited to mitochondria following interaction with AMBRA1 (By similarity).</text>
</comment>
<comment type="tissue specificity">
    <text evidence="7">Widely expressed.</text>
</comment>
<comment type="developmental stage">
    <text evidence="7">During spermatogenesis highest expression at postnatal day 10 and then gradually decreases to day 40, after which it remains constant at low levels. Protein peaks at postnatal day 20, and then gradually decreases by day 45.</text>
</comment>
<comment type="domain">
    <text evidence="2">The HECT domain mediates inhibition of the transcriptional activity of p53.</text>
</comment>
<comment type="PTM">
    <text evidence="2">Phosphorylated on tyrosine, phosphorylation is probably required for its ability to inhibit TP53 transactivation.</text>
</comment>
<comment type="similarity">
    <text evidence="10">Belongs to the UPL family. TOM1/PTR1 subfamily.</text>
</comment>
<comment type="sequence caution" evidence="10">
    <conflict type="frameshift">
        <sequence resource="EMBL-CDS" id="AAA81950"/>
    </conflict>
</comment>
<gene>
    <name type="primary">Huwe1</name>
    <name type="synonym">Ureb1</name>
</gene>
<sequence>MKVDRTKLKKTPTEAPADCRALIDKLKVCNDEQLLLELQQIKTWNIGKCELYHWVDLLDRFDGILADAGQTVENMSWMLVCDRPEKEQLKMLLLAVLNFTALLIEYSFSRHLYSSIEHLTTLLASSDMQVVLAVLNLLYVFSKRSNYITRLGSDKRTPLLTRLQHLAESWGGKENGFGLAECCRDLQMLKYPPSATTLHFEFYADPGAEVKIEKRTTSNTLHYIHIEQLDKISESPSEIMESLTKMYSIPKDKQMLLFTHIRLAHGFSNHRKRLQAVQARLHAISILVYSNALQESANSILYNGLIEELVDVLQITDKQLMEIKAASLRTLTSIVHLERTPKLSSIIDCTGTASYHGFLPVLVRNCIQAMIDPSMDPYPHQFATALFSFLYHLASYDAGGEALVSCGMMEALLKVIKFLGDEQDQITFVTRAVRVVDLITNLDMAAFQSHSGLSIFIYRLEHEVDLCRKECPFVIKPKIQRPSTTQEGEEMETDMDVADVTMESSPGSSISMEHRLDVELRASSSNSSTSISGPGPGPGPGPGPGPGPGPGPGPGPGLGPSLGPGPGPGPRPGVQCIPQRAALLKSMLNFLKKAIQDPAFSDGIRHVMDGSLPTSLKHIISNAEYYGPSLFLLATEVVTVFVFQEPSLLSSLQDNGLTDVMLHALLIKDVPATREVLGSLPNVFSALCLNARGLQSFVQCQPFERLFKVLLSPDYLPAMRRRRSSDPLGDTASNLGSAVDELMRHQPTLKTDATTAIIKLLEEICNLGRDPKYICQKPSIQKADGTTSAPPPRSNHAAEEASSEDEEEEEVQAMQSFNSAQQNETEPNQQVVGTEERIPIPLMDYILNVMKFVESILSNNTTDDHCQEFVNQKGLLPLVTILGLPNLPIDFPTSAACQAVAGVCKSILTLSHEPKVLQEGLLQLDLILSSLEPLHRPIESPGGSVLLRELACAGNVADATLSAQATPLLHALTAAHAYIMMFVHTCRVGQSEIRSISVNQWGSQLGLSVLSKLSQLYCSLVWESTVLLSLCTPNSLPSGCEFGQADMQKLVPKDEKAGTTQGGKRSDGEQDGTAGSMDASAQGLLEGIELDGDTLAPMETDEPSSSDSKGKSKITPAMAARIKQIKPLLSASSRLGRALAELFGLLVKLCVGSPVRQRRSHHAASTTTAPTPAARSTASALTKLLTKGLSWQPPPYTPTPRFRLTFFICSVGFTSPMLFDERKYPYHLMLQKFLCSGGHNALFETFNWALSMGGKVPVSEGLEHSDLPDGTGEFLDAWLMLVEKMVNPTTVLESPHSLPAKLPGGVQSFPQFSALRFLVVTQKAAFTCIKNLWNRKPLKVYGGRMAESMLAILCHILRGEPVIRERLSKEKEGSRGEEEAGQEEGGSRREPQVNQQQLQQLMDMGFTREHAMEALLNTSTMEQATEYLLTHPPPIIGGVVRDLSMSEEDQMMRAIAMSLGQDIPMDQRAESPEEVACRKEEEERKAREKQEEEEAKCLEKFQDADPLEQDELHTFTDTMLPGCFHLLDELPDTVYRVCDLIMTAIKRNGADYRDMILKQVVNQVWEAADVLIKAALPLTTSDTKTVSEWISQMATLPQASNLATRILLLTLLFEELKLPCAWVVESSGILNVLIKLLEVVQPCLQAAKEQKEVQTPKWITPVLLLIDFYEKTAISSKRRAQMTKYLQSNSNNWRWFDDRSGRWCSYSASNNSTIDSAWKSGETSVRFTAGRRRYTVQFTTMVQVNEETGNRRPVMLTLLRVPRLSKNSKSSNGQELEKTLEESKETDIKRKENKGNDIPLALESTNTEKDASLEETKIGEILIQGLTEDMVTVLIRACVSMLGVPVDPDTLHATLRLCLRLTRDHKYAMMFAELKSTRMILNLTQSSGFNGFTPLVTLLLRHIIEDPCTLRHTMEKVVRSAATSGAGSTTSGVVSGSLGSREINYILRVLGPAACRNPDIFTEVANCCIRIALPAPRGSGTASDDEFENLRIKGPNAVQLVKTTPLKPSSLPVIPDTIKEVIYDMLNALAAYHAPEEADKSDPKPGGMTQEVGQLLQDMGDDVYQQYRSLTRQSSDFDTQSGFSLNSQVFAADGAPAETSTTGTSQGEGASTPEETREGKKDKEGDRTSEEGKQKGKGSKPLMPTSTILRLLAELVRSYVGIATLIANYSYTVGQSELIKEDCSVLAFVLDHLLPHTQNAEDKDTPALARLFLASLAAAGSGTDAQVALVNEVKAALGRALAMAESTEKHARLQAVMCIISTIMESCPSTSSFYSSATAKTQHNGMNNIIRLFLKKGLVNDLARVPHSLDLSSPNMANTVNAALKPLETLSRIVNQPSSLFGSKSASSKSKSEQDAQGASQDSSSHQQDPGEPGEAEVQEEDHDVTQTEVADGDIMDGEAETDSVVIAGQPEVLSSQEMQVENELEDLIDELLERDGGSGNSTIIVSRSGEDESQEDVLMDEAPSNLSQASTLQANREDSMNILDPEDEEEHTQEEDSSGSNEDEDDSQDEEEEEEEDEEDDQEDDEGEEGDEDDDDDGSEMELDEDYPDMNASPLVRFERFDREDDLIIEFDNMFSSATDIPPSPGNIPTTHPLMVRHADHSSLTLGSGSSTTRLTQGIGRSQRTLRQLTANTGHTIHVHYPGNRQPNPPLILQRLLGPSAAADILQLSSSLPLQSRGRARLLVGNDDVHIIARSDDELLDDFFHDQSTATSQAGTLSSIPTALTRWTEECKVLDAESMHDCVSVVKVPIVNHLEFLRDEELEERREKRRKQLAEEETKIIDKGKEDKENRDQSAQCTVSKTNDSTEQNVSDGTPMPDSYPTTPSSTDAPTSESKETLGTLQPSQQQPTLPPPPSLGEISQELQSPAEEVGNSTQLLMPIELEELGPTRPSGEAETTQMELSPAPTITSLSPERAEDSDALTAVSSQLEGSPMDTSSLASCTLEEAVGDTPAAGSSEQPTAGSSTPGDAPSVGADVQGRPDVSRESTQPPEDSSPPASSESSSTRDSAVAISGADSRGILEEPLPSTSSEEEDPLAGISLPEGVDPSFLAALPDDIRREVLQNQLGIRPPTRTAPSTNSSTPAVVGNPGVTEVSPEFLAALPPAIQEEVLAQQRAEQQRRELAQNASSDTPMDPVTFIQTLPSDLRRSVLEDMEDSVLAVMPPDIAAEAQALRREQEARQRQLMHERLFGHSSTSALSAILRSPAFTSRLSGNRGVQYTRLAVQRGGTFQMGGSSSHNRPSGSNVDTLLRLRGRLLLDHEALSCLLVLLFVDEPKLNTSRLHRVLRNLCYHAQTRHWVIRSLLSILQRSSESELCIETPKLSTSEERGKKSSKSCASSSHENRPLDLLHKMESKSSNQLSWLSVSMDAALGCRTNIFQIQRSGGRKHTEKHASSGSTVHIHPQAAPVVCRHVLDTLIQLAKVFPSHFTQQRTKETNCESDRERGSKQACSPCSSQSSSSGICTDFWDLLVKLDNMNVSRKGKNSVKSVPVSAGGEGETSLHSLEASPLGQLMNMLSHPVIRRSSLLTEKLLRLLSLISIALPENKVSEVQTNSSNSGSSTAATSNTSTTTTTTTATAPTPTPPAATTPVTSAPALVAATAISTITVAASTTVTTPTTATTTVSTSTTKGNKSPAKVGEGGSSSVDFKMVSSGLTENQLQLSVEVLTSHSCSEEGLEDAANVLLQLSRGDSGTRDTVLKLLLNGARHLGYTLCKQIGTLLAELREYNLEQQRRAQCETLSPDGLPEEQPQTTKLKGKMQSRFDMAENVVIVASQKRPLGGRELQLPSMSMLTSKTSTQKFFLRVLQVIIQLRDDTRRANKKAKQTGRLGSSGLGSASSIQAAVRQLEAEADAIIQMVREGQRARRQQQAATSESSNQSETSVRREESPMDVDQPSPSAQDTQSIVVSDGTPQGEKEKEERPPELPLLSEQLSLDELWDMLGECLKELEESHDQHAVLVLQPAVEAFFLVHATERESKPPVRDTRESQLAHIKDEPPPLSPAPLTPATPSSLDPFFSREPSSMHISSSLPPDTQKFLRFAETHRTVLNQILRQSTTHLADGPFAVLVDYIRVLDFDVKRKYFRQELERLDEGLRKEDMAVHVRRDHVFEDSYRELHRKSPEEMKNRLYIVFEGEEGQDAGGLLREWYMIISREMFNPMYALFRTSPGDRVTYTINPSSHCNPNHLSYFKFVGRIVAKAVYDNRLLECYFTRSFYKHILGKSVRYTDMESEDYHFYQGLVYLLENDVSTLGYDLTFSTEVQEFGVCEVRDLKPNGANILVTEENKKEYVHLVCQMRMTGAIRKQLAAFLEGFYEIIPKRLISIFTEQELELLISGLPTIDIDDLKSNTEYHKYQSNSIQIQWFWRALRSFDQADRAKFLQFVTGTSKVPLQGFAALEGMNGIQKFQIHRDDRSTDRLPSAHTCFNQLDLPAYESFEKLRHMLLLAIQECSEGFGLA</sequence>
<organism>
    <name type="scientific">Rattus norvegicus</name>
    <name type="common">Rat</name>
    <dbReference type="NCBI Taxonomy" id="10116"/>
    <lineage>
        <taxon>Eukaryota</taxon>
        <taxon>Metazoa</taxon>
        <taxon>Chordata</taxon>
        <taxon>Craniata</taxon>
        <taxon>Vertebrata</taxon>
        <taxon>Euteleostomi</taxon>
        <taxon>Mammalia</taxon>
        <taxon>Eutheria</taxon>
        <taxon>Euarchontoglires</taxon>
        <taxon>Glires</taxon>
        <taxon>Rodentia</taxon>
        <taxon>Myomorpha</taxon>
        <taxon>Muroidea</taxon>
        <taxon>Muridae</taxon>
        <taxon>Murinae</taxon>
        <taxon>Rattus</taxon>
    </lineage>
</organism>